<organism>
    <name type="scientific">Aeropyrum pernix (strain ATCC 700893 / DSM 11879 / JCM 9820 / NBRC 100138 / K1)</name>
    <dbReference type="NCBI Taxonomy" id="272557"/>
    <lineage>
        <taxon>Archaea</taxon>
        <taxon>Thermoproteota</taxon>
        <taxon>Thermoprotei</taxon>
        <taxon>Desulfurococcales</taxon>
        <taxon>Desulfurococcaceae</taxon>
        <taxon>Aeropyrum</taxon>
    </lineage>
</organism>
<name>OFOA1_AERPE</name>
<sequence>MRKDVVLLVGGAQGSGLETTMQVLAPAYASLGYGVLANREYFSNIVGRHSYIHIRVSSSGEARPLYYPADFLGAMDAETVFTHWDDIGEGAFLLYDLGTARMRLQQIASMEPDLRSRLMQQYREAGIEPFTVEKVVEYLEREKRVRVIGLSFTALFDVLIKKHGLSRAQAQRFRSSILIGAIAGLTSLDREALDLGLQRRFGSRPKVLEINRDFIASVADEVEKEYGAQLKLEPAEPKSGEYVVASGNDVVAMGKVVGGVRYQAYYPITPASDESVLLEEFEGLKIDGESLGSIAILQTEDEIAAVSSVIGAALTGARASTATSGPGFSLMVEALGWAGKNDVPMVITYYQRGGPSTGLPTRGSQSDLLFSLFASHGEFPRIILSSGDHLEAFYDAIEAYNLAERFQMPVIHLLDKFLANMVASVPFPDWKAIKIDRGKTLFKAPTGPFKRFPRDQPLADRPVLGSGAITWYTGDENDEYGHIDEDPVNRLVMYERRWKKMEIADREIPEDFRVKYYGDEDAEVLLVGWGSVKIPALEAIERLREMGVNAAYLHLRMLSPLPKRRVSEVLSRFDADRVIAVEANYLGQASKIVTMETGFMFRKYILKWTGRPVYLHELVEGVLDIVRNGRDKVVLSYGK</sequence>
<protein>
    <recommendedName>
        <fullName evidence="4">2-oxoacid:ferredoxin oxidoreductase 1, subunit alpha</fullName>
        <shortName evidence="4">OFOR1</shortName>
        <ecNumber evidence="3">1.2.7.11</ecNumber>
    </recommendedName>
</protein>
<comment type="function">
    <text evidence="3">Catalyzes the coenzyme A-dependent oxidative decarboxylation of different 2-oxoacids such as pyruvate, 2-oxobutyrate and glyoxylate to form their CoA derivatives.</text>
</comment>
<comment type="catalytic activity">
    <reaction evidence="3">
        <text>a 2-oxocarboxylate + 2 oxidized [2Fe-2S]-[ferredoxin] + CoA = an acyl-CoA + 2 reduced [2Fe-2S]-[ferredoxin] + CO2 + H(+)</text>
        <dbReference type="Rhea" id="RHEA:42316"/>
        <dbReference type="Rhea" id="RHEA-COMP:10000"/>
        <dbReference type="Rhea" id="RHEA-COMP:10001"/>
        <dbReference type="ChEBI" id="CHEBI:15378"/>
        <dbReference type="ChEBI" id="CHEBI:16526"/>
        <dbReference type="ChEBI" id="CHEBI:33737"/>
        <dbReference type="ChEBI" id="CHEBI:33738"/>
        <dbReference type="ChEBI" id="CHEBI:35179"/>
        <dbReference type="ChEBI" id="CHEBI:57287"/>
        <dbReference type="ChEBI" id="CHEBI:58342"/>
        <dbReference type="EC" id="1.2.7.11"/>
    </reaction>
</comment>
<comment type="biophysicochemical properties">
    <kinetics>
        <KM evidence="3">240 uM for pyruvate (at 80 degrees Celsius)</KM>
        <Vmax evidence="3">10.1 umol/min/mg enzyme with pyruvate as substrate (at 80 degrees Celsius)</Vmax>
    </kinetics>
    <phDependence>
        <text evidence="3">Optimum pH is 8.</text>
    </phDependence>
    <temperatureDependence>
        <text evidence="3">Optimum temperature is 105 degrees Celsius.</text>
    </temperatureDependence>
</comment>
<comment type="subunit">
    <text evidence="3">Heterodimer composed of an alpha and a beta subunit.</text>
</comment>
<comment type="domain">
    <text evidence="1">The Tyr-Pro-Ile-Thr-Pro (YPITP) motif is important for the turnover of the reaction, presumably through its flexibility and mobility.</text>
</comment>
<proteinExistence type="evidence at protein level"/>
<gene>
    <name evidence="5" type="ordered locus">APE_2126.1</name>
</gene>
<dbReference type="EC" id="1.2.7.11" evidence="3"/>
<dbReference type="EMBL" id="BA000002">
    <property type="protein sequence ID" value="BAA81137.2"/>
    <property type="molecule type" value="Genomic_DNA"/>
</dbReference>
<dbReference type="PIR" id="A72519">
    <property type="entry name" value="A72519"/>
</dbReference>
<dbReference type="RefSeq" id="WP_010866810.1">
    <property type="nucleotide sequence ID" value="NC_000854.2"/>
</dbReference>
<dbReference type="SMR" id="Q9YA13"/>
<dbReference type="STRING" id="272557.APE_2126.1"/>
<dbReference type="EnsemblBacteria" id="BAA81137">
    <property type="protein sequence ID" value="BAA81137"/>
    <property type="gene ID" value="APE_2126.1"/>
</dbReference>
<dbReference type="GeneID" id="1445211"/>
<dbReference type="KEGG" id="ape:APE_2126.1"/>
<dbReference type="PATRIC" id="fig|272557.25.peg.1416"/>
<dbReference type="eggNOG" id="arCOG01606">
    <property type="taxonomic scope" value="Archaea"/>
</dbReference>
<dbReference type="Proteomes" id="UP000002518">
    <property type="component" value="Chromosome"/>
</dbReference>
<dbReference type="GO" id="GO:0018491">
    <property type="term" value="F:2-oxobutyrate synthase activity"/>
    <property type="evidence" value="ECO:0000314"/>
    <property type="project" value="UniProtKB"/>
</dbReference>
<dbReference type="GO" id="GO:0019164">
    <property type="term" value="F:pyruvate synthase activity"/>
    <property type="evidence" value="ECO:0000314"/>
    <property type="project" value="UniProtKB"/>
</dbReference>
<dbReference type="GO" id="GO:0006979">
    <property type="term" value="P:response to oxidative stress"/>
    <property type="evidence" value="ECO:0007669"/>
    <property type="project" value="TreeGrafter"/>
</dbReference>
<dbReference type="CDD" id="cd07034">
    <property type="entry name" value="TPP_PYR_PFOR_IOR-alpha_like"/>
    <property type="match status" value="1"/>
</dbReference>
<dbReference type="FunFam" id="3.40.50.970:FF:000022">
    <property type="entry name" value="2-oxoglutarate ferredoxin oxidoreductase alpha subunit"/>
    <property type="match status" value="1"/>
</dbReference>
<dbReference type="FunFam" id="3.40.50.920:FF:000009">
    <property type="entry name" value="2-oxoglutarate ferredoxin oxidoreductase subunit alpha"/>
    <property type="match status" value="1"/>
</dbReference>
<dbReference type="Gene3D" id="3.40.50.920">
    <property type="match status" value="1"/>
</dbReference>
<dbReference type="Gene3D" id="3.40.50.970">
    <property type="match status" value="1"/>
</dbReference>
<dbReference type="Gene3D" id="3.40.920.10">
    <property type="entry name" value="Pyruvate-ferredoxin oxidoreductase, PFOR, domain III"/>
    <property type="match status" value="1"/>
</dbReference>
<dbReference type="InterPro" id="IPR022367">
    <property type="entry name" value="2-oxoacid/accept_OxRdtase_asu"/>
</dbReference>
<dbReference type="InterPro" id="IPR053400">
    <property type="entry name" value="2-oxoacid_Fdx_oxidoreductase"/>
</dbReference>
<dbReference type="InterPro" id="IPR033412">
    <property type="entry name" value="PFOR_II"/>
</dbReference>
<dbReference type="InterPro" id="IPR050722">
    <property type="entry name" value="Pyruvate:ferred/Flavod_OxRd"/>
</dbReference>
<dbReference type="InterPro" id="IPR019752">
    <property type="entry name" value="Pyrv/ketoisovalerate_OxRed_cat"/>
</dbReference>
<dbReference type="InterPro" id="IPR002880">
    <property type="entry name" value="Pyrv_Fd/Flavodoxin_OxRdtase_N"/>
</dbReference>
<dbReference type="InterPro" id="IPR002869">
    <property type="entry name" value="Pyrv_flavodox_OxRed_cen"/>
</dbReference>
<dbReference type="InterPro" id="IPR029061">
    <property type="entry name" value="THDP-binding"/>
</dbReference>
<dbReference type="InterPro" id="IPR009014">
    <property type="entry name" value="Transketo_C/PFOR_II"/>
</dbReference>
<dbReference type="NCBIfam" id="TIGR03710">
    <property type="entry name" value="OAFO_sf"/>
    <property type="match status" value="1"/>
</dbReference>
<dbReference type="NCBIfam" id="NF041170">
    <property type="entry name" value="Oxoac_fdxalpha_Archa"/>
    <property type="match status" value="1"/>
</dbReference>
<dbReference type="PANTHER" id="PTHR32154:SF16">
    <property type="entry name" value="PYRUVATE FLAVODOXIN_FERREDOXIN OXIDOREDUCTASE DOMAIN PROTEIN"/>
    <property type="match status" value="1"/>
</dbReference>
<dbReference type="PANTHER" id="PTHR32154">
    <property type="entry name" value="PYRUVATE-FLAVODOXIN OXIDOREDUCTASE-RELATED"/>
    <property type="match status" value="1"/>
</dbReference>
<dbReference type="Pfam" id="PF17147">
    <property type="entry name" value="PFOR_II"/>
    <property type="match status" value="1"/>
</dbReference>
<dbReference type="Pfam" id="PF01558">
    <property type="entry name" value="POR"/>
    <property type="match status" value="1"/>
</dbReference>
<dbReference type="Pfam" id="PF01855">
    <property type="entry name" value="POR_N"/>
    <property type="match status" value="1"/>
</dbReference>
<dbReference type="SUPFAM" id="SSF53323">
    <property type="entry name" value="Pyruvate-ferredoxin oxidoreductase, PFOR, domain III"/>
    <property type="match status" value="1"/>
</dbReference>
<dbReference type="SUPFAM" id="SSF52518">
    <property type="entry name" value="Thiamin diphosphate-binding fold (THDP-binding)"/>
    <property type="match status" value="1"/>
</dbReference>
<dbReference type="SUPFAM" id="SSF52922">
    <property type="entry name" value="TK C-terminal domain-like"/>
    <property type="match status" value="1"/>
</dbReference>
<keyword id="KW-0560">Oxidoreductase</keyword>
<keyword id="KW-0670">Pyruvate</keyword>
<keyword id="KW-1185">Reference proteome</keyword>
<evidence type="ECO:0000250" key="1">
    <source>
        <dbReference type="UniProtKB" id="P72578"/>
    </source>
</evidence>
<evidence type="ECO:0000250" key="2">
    <source>
        <dbReference type="UniProtKB" id="Q96XT2"/>
    </source>
</evidence>
<evidence type="ECO:0000269" key="3">
    <source>
    </source>
</evidence>
<evidence type="ECO:0000303" key="4">
    <source>
    </source>
</evidence>
<evidence type="ECO:0000312" key="5">
    <source>
        <dbReference type="EMBL" id="BAA81137.2"/>
    </source>
</evidence>
<evidence type="ECO:0000312" key="6">
    <source>
        <dbReference type="Proteomes" id="UP000002518"/>
    </source>
</evidence>
<reference key="1">
    <citation type="journal article" date="1999" name="DNA Res.">
        <title>Complete genome sequence of an aerobic hyper-thermophilic crenarchaeon, Aeropyrum pernix K1.</title>
        <authorList>
            <person name="Kawarabayasi Y."/>
            <person name="Hino Y."/>
            <person name="Horikawa H."/>
            <person name="Yamazaki S."/>
            <person name="Haikawa Y."/>
            <person name="Jin-no K."/>
            <person name="Takahashi M."/>
            <person name="Sekine M."/>
            <person name="Baba S."/>
            <person name="Ankai A."/>
            <person name="Kosugi H."/>
            <person name="Hosoyama A."/>
            <person name="Fukui S."/>
            <person name="Nagai Y."/>
            <person name="Nishijima K."/>
            <person name="Nakazawa H."/>
            <person name="Takamiya M."/>
            <person name="Masuda S."/>
            <person name="Funahashi T."/>
            <person name="Tanaka T."/>
            <person name="Kudoh Y."/>
            <person name="Yamazaki J."/>
            <person name="Kushida N."/>
            <person name="Oguchi A."/>
            <person name="Aoki K."/>
            <person name="Kubota K."/>
            <person name="Nakamura Y."/>
            <person name="Nomura N."/>
            <person name="Sako Y."/>
            <person name="Kikuchi H."/>
        </authorList>
    </citation>
    <scope>NUCLEOTIDE SEQUENCE [LARGE SCALE GENOMIC DNA]</scope>
    <source>
        <strain evidence="6">ATCC 700893 / DSM 11879 / JCM 9820 / NBRC 100138 / K1</strain>
    </source>
</reference>
<reference key="2">
    <citation type="journal article" date="2005" name="FEBS Lett.">
        <title>Gene expression and characterization of two 2-oxoacid:ferredoxin oxidoreductases from Aeropyrum pernix K1.</title>
        <authorList>
            <person name="Nishizawa Y."/>
            <person name="Yabuki T."/>
            <person name="Fukuda E."/>
            <person name="Wakagi T."/>
        </authorList>
    </citation>
    <scope>FUNCTION</scope>
    <scope>CATALYTIC ACTIVITY</scope>
    <scope>BIOPHYSICOCHEMICAL PROPERTIES</scope>
    <scope>SUBUNIT</scope>
    <scope>SUBSTRATE SPECIFICITY</scope>
    <source>
        <strain>ATCC 700893 / DSM 11879 / JCM 9820 / NBRC 100138 / K1</strain>
    </source>
</reference>
<feature type="chain" id="PRO_0000445535" description="2-oxoacid:ferredoxin oxidoreductase 1, subunit alpha">
    <location>
        <begin position="1"/>
        <end position="639"/>
    </location>
</feature>
<feature type="short sequence motif" description="YPITP motif" evidence="1">
    <location>
        <begin position="266"/>
        <end position="270"/>
    </location>
</feature>
<feature type="binding site" evidence="2">
    <location>
        <position position="269"/>
    </location>
    <ligand>
        <name>substrate</name>
    </ligand>
</feature>
<feature type="binding site" evidence="2">
    <location>
        <position position="352"/>
    </location>
    <ligand>
        <name>substrate</name>
    </ligand>
</feature>
<accession>Q9YA13</accession>